<keyword id="KW-0028">Amino-acid biosynthesis</keyword>
<keyword id="KW-0032">Aminotransferase</keyword>
<keyword id="KW-0368">Histidine biosynthesis</keyword>
<keyword id="KW-0663">Pyridoxal phosphate</keyword>
<keyword id="KW-0808">Transferase</keyword>
<sequence length="368" mass="40531">MLMSLSRRELIKKEIFDIEEYVPGRSIEEIASTYGLKPESIIKLGSNENPLGPSPKAVKALIEAAPGANIYPSADAHELREALSKYTGFPVSNIVASGPGMDGLLDGLCRIIIEKGDEVIVPIPTFSYYELPARACGAEPVFIRRNQDFSLNPEKILEAVSPRTKIIFLCSPNNPSGNLLPEADLRKIIENTDALVFVDEAYVEFADRNLAALVNEYDNVAVGRTFSKVFGLAGLRLGYGIMPEWLTKEYLRAATPFSVSLPALRAGLAALSDTEYLNKSINLAREGREYLKEKIPFKVYPSQANFVLVDVSPLKAKKVTESLLKKGIIVRPCDSFREAGDSFIRVTVGTPEQNEKVVRAFEISKSEV</sequence>
<gene>
    <name evidence="1" type="primary">hisC</name>
    <name type="ordered locus">MM_1405</name>
</gene>
<evidence type="ECO:0000255" key="1">
    <source>
        <dbReference type="HAMAP-Rule" id="MF_01023"/>
    </source>
</evidence>
<protein>
    <recommendedName>
        <fullName evidence="1">Histidinol-phosphate aminotransferase</fullName>
        <ecNumber evidence="1">2.6.1.9</ecNumber>
    </recommendedName>
    <alternativeName>
        <fullName evidence="1">Imidazole acetol-phosphate transaminase</fullName>
    </alternativeName>
</protein>
<organism>
    <name type="scientific">Methanosarcina mazei (strain ATCC BAA-159 / DSM 3647 / Goe1 / Go1 / JCM 11833 / OCM 88)</name>
    <name type="common">Methanosarcina frisia</name>
    <dbReference type="NCBI Taxonomy" id="192952"/>
    <lineage>
        <taxon>Archaea</taxon>
        <taxon>Methanobacteriati</taxon>
        <taxon>Methanobacteriota</taxon>
        <taxon>Stenosarchaea group</taxon>
        <taxon>Methanomicrobia</taxon>
        <taxon>Methanosarcinales</taxon>
        <taxon>Methanosarcinaceae</taxon>
        <taxon>Methanosarcina</taxon>
    </lineage>
</organism>
<accession>Q8PX17</accession>
<dbReference type="EC" id="2.6.1.9" evidence="1"/>
<dbReference type="EMBL" id="AE008384">
    <property type="protein sequence ID" value="AAM31101.1"/>
    <property type="molecule type" value="Genomic_DNA"/>
</dbReference>
<dbReference type="SMR" id="Q8PX17"/>
<dbReference type="KEGG" id="mma:MM_1405"/>
<dbReference type="PATRIC" id="fig|192952.21.peg.1627"/>
<dbReference type="eggNOG" id="arCOG04273">
    <property type="taxonomic scope" value="Archaea"/>
</dbReference>
<dbReference type="HOGENOM" id="CLU_017584_3_3_2"/>
<dbReference type="UniPathway" id="UPA00031">
    <property type="reaction ID" value="UER00012"/>
</dbReference>
<dbReference type="Proteomes" id="UP000000595">
    <property type="component" value="Chromosome"/>
</dbReference>
<dbReference type="GO" id="GO:0004400">
    <property type="term" value="F:histidinol-phosphate transaminase activity"/>
    <property type="evidence" value="ECO:0007669"/>
    <property type="project" value="UniProtKB-UniRule"/>
</dbReference>
<dbReference type="GO" id="GO:0030170">
    <property type="term" value="F:pyridoxal phosphate binding"/>
    <property type="evidence" value="ECO:0007669"/>
    <property type="project" value="InterPro"/>
</dbReference>
<dbReference type="GO" id="GO:0000105">
    <property type="term" value="P:L-histidine biosynthetic process"/>
    <property type="evidence" value="ECO:0007669"/>
    <property type="project" value="UniProtKB-UniRule"/>
</dbReference>
<dbReference type="CDD" id="cd00609">
    <property type="entry name" value="AAT_like"/>
    <property type="match status" value="1"/>
</dbReference>
<dbReference type="Gene3D" id="3.90.1150.10">
    <property type="entry name" value="Aspartate Aminotransferase, domain 1"/>
    <property type="match status" value="1"/>
</dbReference>
<dbReference type="Gene3D" id="3.40.640.10">
    <property type="entry name" value="Type I PLP-dependent aspartate aminotransferase-like (Major domain)"/>
    <property type="match status" value="1"/>
</dbReference>
<dbReference type="HAMAP" id="MF_01023">
    <property type="entry name" value="HisC_aminotrans_2"/>
    <property type="match status" value="1"/>
</dbReference>
<dbReference type="InterPro" id="IPR004839">
    <property type="entry name" value="Aminotransferase_I/II_large"/>
</dbReference>
<dbReference type="InterPro" id="IPR005861">
    <property type="entry name" value="HisP_aminotrans"/>
</dbReference>
<dbReference type="InterPro" id="IPR015424">
    <property type="entry name" value="PyrdxlP-dep_Trfase"/>
</dbReference>
<dbReference type="InterPro" id="IPR015421">
    <property type="entry name" value="PyrdxlP-dep_Trfase_major"/>
</dbReference>
<dbReference type="InterPro" id="IPR015422">
    <property type="entry name" value="PyrdxlP-dep_Trfase_small"/>
</dbReference>
<dbReference type="NCBIfam" id="TIGR01141">
    <property type="entry name" value="hisC"/>
    <property type="match status" value="1"/>
</dbReference>
<dbReference type="PANTHER" id="PTHR42885:SF2">
    <property type="entry name" value="HISTIDINOL-PHOSPHATE AMINOTRANSFERASE"/>
    <property type="match status" value="1"/>
</dbReference>
<dbReference type="PANTHER" id="PTHR42885">
    <property type="entry name" value="HISTIDINOL-PHOSPHATE AMINOTRANSFERASE-RELATED"/>
    <property type="match status" value="1"/>
</dbReference>
<dbReference type="Pfam" id="PF00155">
    <property type="entry name" value="Aminotran_1_2"/>
    <property type="match status" value="1"/>
</dbReference>
<dbReference type="SUPFAM" id="SSF53383">
    <property type="entry name" value="PLP-dependent transferases"/>
    <property type="match status" value="1"/>
</dbReference>
<name>HIS8_METMA</name>
<comment type="catalytic activity">
    <reaction evidence="1">
        <text>L-histidinol phosphate + 2-oxoglutarate = 3-(imidazol-4-yl)-2-oxopropyl phosphate + L-glutamate</text>
        <dbReference type="Rhea" id="RHEA:23744"/>
        <dbReference type="ChEBI" id="CHEBI:16810"/>
        <dbReference type="ChEBI" id="CHEBI:29985"/>
        <dbReference type="ChEBI" id="CHEBI:57766"/>
        <dbReference type="ChEBI" id="CHEBI:57980"/>
        <dbReference type="EC" id="2.6.1.9"/>
    </reaction>
</comment>
<comment type="cofactor">
    <cofactor evidence="1">
        <name>pyridoxal 5'-phosphate</name>
        <dbReference type="ChEBI" id="CHEBI:597326"/>
    </cofactor>
</comment>
<comment type="pathway">
    <text evidence="1">Amino-acid biosynthesis; L-histidine biosynthesis; L-histidine from 5-phospho-alpha-D-ribose 1-diphosphate: step 7/9.</text>
</comment>
<comment type="similarity">
    <text evidence="1">Belongs to the class-II pyridoxal-phosphate-dependent aminotransferase family. Histidinol-phosphate aminotransferase subfamily.</text>
</comment>
<proteinExistence type="inferred from homology"/>
<reference key="1">
    <citation type="journal article" date="2002" name="J. Mol. Microbiol. Biotechnol.">
        <title>The genome of Methanosarcina mazei: evidence for lateral gene transfer between Bacteria and Archaea.</title>
        <authorList>
            <person name="Deppenmeier U."/>
            <person name="Johann A."/>
            <person name="Hartsch T."/>
            <person name="Merkl R."/>
            <person name="Schmitz R.A."/>
            <person name="Martinez-Arias R."/>
            <person name="Henne A."/>
            <person name="Wiezer A."/>
            <person name="Baeumer S."/>
            <person name="Jacobi C."/>
            <person name="Brueggemann H."/>
            <person name="Lienard T."/>
            <person name="Christmann A."/>
            <person name="Boemecke M."/>
            <person name="Steckel S."/>
            <person name="Bhattacharyya A."/>
            <person name="Lykidis A."/>
            <person name="Overbeek R."/>
            <person name="Klenk H.-P."/>
            <person name="Gunsalus R.P."/>
            <person name="Fritz H.-J."/>
            <person name="Gottschalk G."/>
        </authorList>
    </citation>
    <scope>NUCLEOTIDE SEQUENCE [LARGE SCALE GENOMIC DNA]</scope>
    <source>
        <strain>ATCC BAA-159 / DSM 3647 / Goe1 / Go1 / JCM 11833 / OCM 88</strain>
    </source>
</reference>
<feature type="chain" id="PRO_0000153499" description="Histidinol-phosphate aminotransferase">
    <location>
        <begin position="1"/>
        <end position="368"/>
    </location>
</feature>
<feature type="modified residue" description="N6-(pyridoxal phosphate)lysine" evidence="1">
    <location>
        <position position="228"/>
    </location>
</feature>